<sequence>MATLCRPAIAVPEHVITMQQTLDLARETHAGHPQRDLVLRLIQNTGVQTRHLVQPIEKTLAHPGFEVRNQVYEAEAKTRVPEVVRRALANAETEPSEIDLIVYVSCTGFMMPSLTAWIINSMGFRPETRQLPIAQLGCAAGGAAINRAHDFCVAYPDSNVLIVSCEFCSLCYQPTDIGVGSLLSNGLFGDALSAAVVRGQGGTGMRLERNGSHLVPDTEDWISYAVRDTGFHFQLDKRVPGTMEMLAPVLLDLVDLHGWSVPNMDFFIVHAGGPRILDDLCHFLDLPPEMFRYSRATLTERGNIASSVVFDALARLFDDGGAAESAQGLIAGFGPGITAEVAVGSWAKEGLGADVGRDLDELELTAGVALSG</sequence>
<gene>
    <name evidence="3" type="primary">rppA</name>
    <name evidence="3" type="synonym">orf-1</name>
</gene>
<name>RPPA_STRGR</name>
<organism>
    <name type="scientific">Streptomyces griseus</name>
    <dbReference type="NCBI Taxonomy" id="1911"/>
    <lineage>
        <taxon>Bacteria</taxon>
        <taxon>Bacillati</taxon>
        <taxon>Actinomycetota</taxon>
        <taxon>Actinomycetes</taxon>
        <taxon>Kitasatosporales</taxon>
        <taxon>Streptomycetaceae</taxon>
        <taxon>Streptomyces</taxon>
    </lineage>
</organism>
<keyword id="KW-0012">Acyltransferase</keyword>
<keyword id="KW-0470">Melanin biosynthesis</keyword>
<keyword id="KW-0808">Transferase</keyword>
<dbReference type="EC" id="2.3.1.233" evidence="1"/>
<dbReference type="EMBL" id="AB018074">
    <property type="protein sequence ID" value="BAA33495.1"/>
    <property type="molecule type" value="Genomic_DNA"/>
</dbReference>
<dbReference type="EMBL" id="AB218878">
    <property type="protein sequence ID" value="BAE07216.1"/>
    <property type="molecule type" value="Genomic_DNA"/>
</dbReference>
<dbReference type="SMR" id="Q54240"/>
<dbReference type="OMA" id="GTMEMLA"/>
<dbReference type="OrthoDB" id="9786288at2"/>
<dbReference type="BioCyc" id="MetaCyc:MONOMER-18700"/>
<dbReference type="UniPathway" id="UPA00785"/>
<dbReference type="GO" id="GO:0016747">
    <property type="term" value="F:acyltransferase activity, transferring groups other than amino-acyl groups"/>
    <property type="evidence" value="ECO:0000314"/>
    <property type="project" value="UniProtKB"/>
</dbReference>
<dbReference type="GO" id="GO:0042438">
    <property type="term" value="P:melanin biosynthetic process"/>
    <property type="evidence" value="ECO:0000314"/>
    <property type="project" value="UniProtKB"/>
</dbReference>
<dbReference type="GO" id="GO:0030639">
    <property type="term" value="P:polyketide biosynthetic process"/>
    <property type="evidence" value="ECO:0007669"/>
    <property type="project" value="TreeGrafter"/>
</dbReference>
<dbReference type="CDD" id="cd00831">
    <property type="entry name" value="CHS_like"/>
    <property type="match status" value="1"/>
</dbReference>
<dbReference type="FunFam" id="3.40.47.10:FF:000014">
    <property type="entry name" value="Chalcone synthase 1"/>
    <property type="match status" value="1"/>
</dbReference>
<dbReference type="FunFam" id="3.40.47.10:FF:000040">
    <property type="entry name" value="Type III polyketide synthase"/>
    <property type="match status" value="1"/>
</dbReference>
<dbReference type="Gene3D" id="3.40.47.10">
    <property type="match status" value="2"/>
</dbReference>
<dbReference type="InterPro" id="IPR012328">
    <property type="entry name" value="Chalcone/stilbene_synt_C"/>
</dbReference>
<dbReference type="InterPro" id="IPR001099">
    <property type="entry name" value="Chalcone/stilbene_synt_N"/>
</dbReference>
<dbReference type="InterPro" id="IPR011141">
    <property type="entry name" value="Polyketide_synthase_type-III"/>
</dbReference>
<dbReference type="InterPro" id="IPR016039">
    <property type="entry name" value="Thiolase-like"/>
</dbReference>
<dbReference type="PANTHER" id="PTHR11877:SF99">
    <property type="entry name" value="1,3,6,8-TETRAHYDROXYNAPHTHALENE SYNTHASE"/>
    <property type="match status" value="1"/>
</dbReference>
<dbReference type="PANTHER" id="PTHR11877">
    <property type="entry name" value="HYDROXYMETHYLGLUTARYL-COA SYNTHASE"/>
    <property type="match status" value="1"/>
</dbReference>
<dbReference type="Pfam" id="PF02797">
    <property type="entry name" value="Chal_sti_synt_C"/>
    <property type="match status" value="1"/>
</dbReference>
<dbReference type="Pfam" id="PF00195">
    <property type="entry name" value="Chal_sti_synt_N"/>
    <property type="match status" value="1"/>
</dbReference>
<dbReference type="PIRSF" id="PIRSF000451">
    <property type="entry name" value="PKS_III"/>
    <property type="match status" value="1"/>
</dbReference>
<dbReference type="SUPFAM" id="SSF53901">
    <property type="entry name" value="Thiolase-like"/>
    <property type="match status" value="2"/>
</dbReference>
<feature type="chain" id="PRO_0000430881" description="1,3,6,8-tetrahydroxynaphthalene synthase">
    <location>
        <begin position="1"/>
        <end position="372"/>
    </location>
</feature>
<feature type="active site" evidence="1">
    <location>
        <position position="138"/>
    </location>
</feature>
<feature type="mutagenesis site" description="Abolishes the THN synthase activity.">
    <original>C</original>
    <variation>S</variation>
    <location>
        <position position="138"/>
    </location>
</feature>
<comment type="function">
    <text evidence="1">Involved in the biosynthesis of melanin but also various secondary metabolites containing a naphthoquinone ring. Catalyzes the iterative condensation of five CoA-linked malonyl units to form a pentaketide intermediate. THNS subsequently catalyzes the dual intramolecular Claisen and aldol condensations of this linear intermediate to produce the fused ring of 1,3,6,8-tetrahydroxynaphthalene (THN).</text>
</comment>
<comment type="catalytic activity">
    <reaction evidence="1">
        <text>5 malonyl-CoA + 5 H(+) = naphthalene-1,3,6,8-tetrol + 5 CO2 + 5 CoA + H2O</text>
        <dbReference type="Rhea" id="RHEA:41524"/>
        <dbReference type="ChEBI" id="CHEBI:15377"/>
        <dbReference type="ChEBI" id="CHEBI:15378"/>
        <dbReference type="ChEBI" id="CHEBI:16526"/>
        <dbReference type="ChEBI" id="CHEBI:18365"/>
        <dbReference type="ChEBI" id="CHEBI:57287"/>
        <dbReference type="ChEBI" id="CHEBI:57384"/>
        <dbReference type="EC" id="2.3.1.233"/>
    </reaction>
</comment>
<comment type="pathway">
    <text evidence="2">Pigment biosynthesis; melanin biosynthesis.</text>
</comment>
<comment type="subunit">
    <text evidence="1">Homodimer.</text>
</comment>
<comment type="disruption phenotype">
    <text evidence="1">Cells lacking this gene are unable to produce melanin in hyphae, resulting in albino mycelium, however there is no effect on growth or morphological development.</text>
</comment>
<comment type="similarity">
    <text evidence="4">Belongs to the thiolase-like superfamily. Chalcone/stilbene synthases family.</text>
</comment>
<protein>
    <recommendedName>
        <fullName evidence="2">1,3,6,8-tetrahydroxynaphthalene synthase</fullName>
        <shortName evidence="2">THNS</shortName>
        <ecNumber evidence="1">2.3.1.233</ecNumber>
    </recommendedName>
    <alternativeName>
        <fullName evidence="4">1,3,6,8-tetrahydroxynaphthalene synthesis polyketide synthase type III</fullName>
    </alternativeName>
</protein>
<proteinExistence type="evidence at protein level"/>
<accession>Q54240</accession>
<reference key="1">
    <citation type="journal article" date="1995" name="J. Antibiot.">
        <title>Overexpression of a gene cluster encoding a chalcone synthase-like protein confers redbrown pigment production in Streptomyces griseus.</title>
        <authorList>
            <person name="Ueda K."/>
            <person name="Kim K.M."/>
            <person name="Beppu T."/>
            <person name="Horinouchi S."/>
        </authorList>
    </citation>
    <scope>NUCLEOTIDE SEQUENCE [GENOMIC DNA]</scope>
</reference>
<reference key="2">
    <citation type="journal article" date="2005" name="J. Bacteriol.">
        <title>Biosynthesis of hexahydroxyperylenequinone melanin via oxidative aryl coupling by cytochrome P-450 in Streptomyces griseus.</title>
        <authorList>
            <person name="Funa N."/>
            <person name="Funabashi M."/>
            <person name="Ohnishi Y."/>
            <person name="Horinouchi S."/>
        </authorList>
    </citation>
    <scope>NUCLEOTIDE SEQUENCE [GENOMIC DNA]</scope>
    <scope>PATHWAY</scope>
    <source>
        <strain>IFO13350</strain>
    </source>
</reference>
<reference key="3">
    <citation type="journal article" date="1999" name="Nature">
        <title>A new pathway for polyketide synthesis in microorganisms.</title>
        <authorList>
            <person name="Funa N."/>
            <person name="Ohnishi Y."/>
            <person name="Fujii I."/>
            <person name="Shibuya M."/>
            <person name="Ebizuka Y."/>
            <person name="Horinouchi S."/>
        </authorList>
    </citation>
    <scope>FUNCTION</scope>
    <scope>CATALYTIC ACTIVITY</scope>
    <scope>MUTAGENESIS OF CYS-138</scope>
    <scope>DISRUPTION PHENOTYPE</scope>
    <scope>ACTIVE SITE</scope>
    <scope>SUBUNIT</scope>
</reference>
<evidence type="ECO:0000269" key="1">
    <source>
    </source>
</evidence>
<evidence type="ECO:0000303" key="2">
    <source>
    </source>
</evidence>
<evidence type="ECO:0000303" key="3">
    <source>
    </source>
</evidence>
<evidence type="ECO:0000305" key="4"/>